<dbReference type="EC" id="2.7.7.77" evidence="1"/>
<dbReference type="EMBL" id="AM181176">
    <property type="protein sequence ID" value="CAY48000.1"/>
    <property type="molecule type" value="Genomic_DNA"/>
</dbReference>
<dbReference type="RefSeq" id="WP_012723027.1">
    <property type="nucleotide sequence ID" value="NC_012660.1"/>
</dbReference>
<dbReference type="SMR" id="C3K7L4"/>
<dbReference type="PATRIC" id="fig|216595.4.peg.1975"/>
<dbReference type="eggNOG" id="COG0746">
    <property type="taxonomic scope" value="Bacteria"/>
</dbReference>
<dbReference type="HOGENOM" id="CLU_055597_5_1_6"/>
<dbReference type="OrthoDB" id="9788394at2"/>
<dbReference type="GO" id="GO:0005737">
    <property type="term" value="C:cytoplasm"/>
    <property type="evidence" value="ECO:0007669"/>
    <property type="project" value="UniProtKB-SubCell"/>
</dbReference>
<dbReference type="GO" id="GO:0005525">
    <property type="term" value="F:GTP binding"/>
    <property type="evidence" value="ECO:0007669"/>
    <property type="project" value="UniProtKB-UniRule"/>
</dbReference>
<dbReference type="GO" id="GO:0046872">
    <property type="term" value="F:metal ion binding"/>
    <property type="evidence" value="ECO:0007669"/>
    <property type="project" value="UniProtKB-KW"/>
</dbReference>
<dbReference type="GO" id="GO:0061603">
    <property type="term" value="F:molybdenum cofactor guanylyltransferase activity"/>
    <property type="evidence" value="ECO:0007669"/>
    <property type="project" value="UniProtKB-EC"/>
</dbReference>
<dbReference type="GO" id="GO:1902758">
    <property type="term" value="P:bis(molybdopterin guanine dinucleotide)molybdenum biosynthetic process"/>
    <property type="evidence" value="ECO:0007669"/>
    <property type="project" value="TreeGrafter"/>
</dbReference>
<dbReference type="CDD" id="cd02503">
    <property type="entry name" value="MobA"/>
    <property type="match status" value="1"/>
</dbReference>
<dbReference type="Gene3D" id="3.90.550.10">
    <property type="entry name" value="Spore Coat Polysaccharide Biosynthesis Protein SpsA, Chain A"/>
    <property type="match status" value="1"/>
</dbReference>
<dbReference type="HAMAP" id="MF_00316">
    <property type="entry name" value="MobA"/>
    <property type="match status" value="1"/>
</dbReference>
<dbReference type="InterPro" id="IPR025877">
    <property type="entry name" value="MobA-like_NTP_Trfase"/>
</dbReference>
<dbReference type="InterPro" id="IPR013482">
    <property type="entry name" value="Molybde_CF_guanTrfase"/>
</dbReference>
<dbReference type="InterPro" id="IPR029044">
    <property type="entry name" value="Nucleotide-diphossugar_trans"/>
</dbReference>
<dbReference type="NCBIfam" id="TIGR02665">
    <property type="entry name" value="molyb_mobA"/>
    <property type="match status" value="1"/>
</dbReference>
<dbReference type="PANTHER" id="PTHR19136">
    <property type="entry name" value="MOLYBDENUM COFACTOR GUANYLYLTRANSFERASE"/>
    <property type="match status" value="1"/>
</dbReference>
<dbReference type="PANTHER" id="PTHR19136:SF81">
    <property type="entry name" value="MOLYBDENUM COFACTOR GUANYLYLTRANSFERASE"/>
    <property type="match status" value="1"/>
</dbReference>
<dbReference type="Pfam" id="PF12804">
    <property type="entry name" value="NTP_transf_3"/>
    <property type="match status" value="1"/>
</dbReference>
<dbReference type="SUPFAM" id="SSF53448">
    <property type="entry name" value="Nucleotide-diphospho-sugar transferases"/>
    <property type="match status" value="1"/>
</dbReference>
<evidence type="ECO:0000255" key="1">
    <source>
        <dbReference type="HAMAP-Rule" id="MF_00316"/>
    </source>
</evidence>
<organism>
    <name type="scientific">Pseudomonas fluorescens (strain SBW25)</name>
    <dbReference type="NCBI Taxonomy" id="216595"/>
    <lineage>
        <taxon>Bacteria</taxon>
        <taxon>Pseudomonadati</taxon>
        <taxon>Pseudomonadota</taxon>
        <taxon>Gammaproteobacteria</taxon>
        <taxon>Pseudomonadales</taxon>
        <taxon>Pseudomonadaceae</taxon>
        <taxon>Pseudomonas</taxon>
    </lineage>
</organism>
<comment type="function">
    <text evidence="1">Transfers a GMP moiety from GTP to Mo-molybdopterin (Mo-MPT) cofactor (Moco or molybdenum cofactor) to form Mo-molybdopterin guanine dinucleotide (Mo-MGD) cofactor.</text>
</comment>
<comment type="catalytic activity">
    <reaction evidence="1">
        <text>Mo-molybdopterin + GTP + H(+) = Mo-molybdopterin guanine dinucleotide + diphosphate</text>
        <dbReference type="Rhea" id="RHEA:34243"/>
        <dbReference type="ChEBI" id="CHEBI:15378"/>
        <dbReference type="ChEBI" id="CHEBI:33019"/>
        <dbReference type="ChEBI" id="CHEBI:37565"/>
        <dbReference type="ChEBI" id="CHEBI:71302"/>
        <dbReference type="ChEBI" id="CHEBI:71310"/>
        <dbReference type="EC" id="2.7.7.77"/>
    </reaction>
</comment>
<comment type="cofactor">
    <cofactor evidence="1">
        <name>Mg(2+)</name>
        <dbReference type="ChEBI" id="CHEBI:18420"/>
    </cofactor>
</comment>
<comment type="subunit">
    <text evidence="1">Monomer.</text>
</comment>
<comment type="subcellular location">
    <subcellularLocation>
        <location evidence="1">Cytoplasm</location>
    </subcellularLocation>
</comment>
<comment type="domain">
    <text evidence="1">The N-terminal domain determines nucleotide recognition and specific binding, while the C-terminal domain determines the specific binding to the target protein.</text>
</comment>
<comment type="similarity">
    <text evidence="1">Belongs to the MobA family.</text>
</comment>
<protein>
    <recommendedName>
        <fullName evidence="1">Molybdenum cofactor guanylyltransferase</fullName>
        <shortName evidence="1">MoCo guanylyltransferase</shortName>
        <ecNumber evidence="1">2.7.7.77</ecNumber>
    </recommendedName>
    <alternativeName>
        <fullName evidence="1">GTP:molybdopterin guanylyltransferase</fullName>
    </alternativeName>
    <alternativeName>
        <fullName evidence="1">Mo-MPT guanylyltransferase</fullName>
    </alternativeName>
    <alternativeName>
        <fullName evidence="1">Molybdopterin guanylyltransferase</fullName>
    </alternativeName>
    <alternativeName>
        <fullName evidence="1">Molybdopterin-guanine dinucleotide synthase</fullName>
        <shortName evidence="1">MGD synthase</shortName>
    </alternativeName>
</protein>
<name>MOBA_PSEFS</name>
<keyword id="KW-0963">Cytoplasm</keyword>
<keyword id="KW-0342">GTP-binding</keyword>
<keyword id="KW-0460">Magnesium</keyword>
<keyword id="KW-0479">Metal-binding</keyword>
<keyword id="KW-0501">Molybdenum cofactor biosynthesis</keyword>
<keyword id="KW-0547">Nucleotide-binding</keyword>
<keyword id="KW-0808">Transferase</keyword>
<accession>C3K7L4</accession>
<reference key="1">
    <citation type="journal article" date="2009" name="Genome Biol.">
        <title>Genomic and genetic analyses of diversity and plant interactions of Pseudomonas fluorescens.</title>
        <authorList>
            <person name="Silby M.W."/>
            <person name="Cerdeno-Tarraga A.M."/>
            <person name="Vernikos G.S."/>
            <person name="Giddens S.R."/>
            <person name="Jackson R.W."/>
            <person name="Preston G.M."/>
            <person name="Zhang X.-X."/>
            <person name="Moon C.D."/>
            <person name="Gehrig S.M."/>
            <person name="Godfrey S.A.C."/>
            <person name="Knight C.G."/>
            <person name="Malone J.G."/>
            <person name="Robinson Z."/>
            <person name="Spiers A.J."/>
            <person name="Harris S."/>
            <person name="Challis G.L."/>
            <person name="Yaxley A.M."/>
            <person name="Harris D."/>
            <person name="Seeger K."/>
            <person name="Murphy L."/>
            <person name="Rutter S."/>
            <person name="Squares R."/>
            <person name="Quail M.A."/>
            <person name="Saunders E."/>
            <person name="Mavromatis K."/>
            <person name="Brettin T.S."/>
            <person name="Bentley S.D."/>
            <person name="Hothersall J."/>
            <person name="Stephens E."/>
            <person name="Thomas C.M."/>
            <person name="Parkhill J."/>
            <person name="Levy S.B."/>
            <person name="Rainey P.B."/>
            <person name="Thomson N.R."/>
        </authorList>
    </citation>
    <scope>NUCLEOTIDE SEQUENCE [LARGE SCALE GENOMIC DNA]</scope>
    <source>
        <strain>SBW25</strain>
    </source>
</reference>
<feature type="chain" id="PRO_1000205078" description="Molybdenum cofactor guanylyltransferase">
    <location>
        <begin position="1"/>
        <end position="200"/>
    </location>
</feature>
<feature type="binding site" evidence="1">
    <location>
        <begin position="15"/>
        <end position="17"/>
    </location>
    <ligand>
        <name>GTP</name>
        <dbReference type="ChEBI" id="CHEBI:37565"/>
    </ligand>
</feature>
<feature type="binding site" evidence="1">
    <location>
        <position position="28"/>
    </location>
    <ligand>
        <name>GTP</name>
        <dbReference type="ChEBI" id="CHEBI:37565"/>
    </ligand>
</feature>
<feature type="binding site" evidence="1">
    <location>
        <position position="74"/>
    </location>
    <ligand>
        <name>GTP</name>
        <dbReference type="ChEBI" id="CHEBI:37565"/>
    </ligand>
</feature>
<feature type="binding site" evidence="1">
    <location>
        <position position="104"/>
    </location>
    <ligand>
        <name>GTP</name>
        <dbReference type="ChEBI" id="CHEBI:37565"/>
    </ligand>
</feature>
<feature type="binding site" evidence="1">
    <location>
        <position position="104"/>
    </location>
    <ligand>
        <name>Mg(2+)</name>
        <dbReference type="ChEBI" id="CHEBI:18420"/>
    </ligand>
</feature>
<proteinExistence type="inferred from homology"/>
<gene>
    <name evidence="1" type="primary">mobA</name>
    <name type="ordered locus">PFLU_1753</name>
</gene>
<sequence length="200" mass="21954">MPIDSSPLPCSVLLLSGGRGQRMGGQDKGLLEWRGQPLIAHLQRLARPLTDDLIISCNRNPERYADYADQLVNDDSPDFPGPLAGIRAGLAAARHEHLLILPCDVPHIDAPLLADLRETARRNLLLPVMVRHGEFWEPLICIIPTRLRAAVEDAWHAGERSPRKIFLQLGGVGLECPADDPRLANLNTPQLLQTPSGVSE</sequence>